<organism>
    <name type="scientific">Salmonella typhimurium (strain LT2 / SGSC1412 / ATCC 700720)</name>
    <dbReference type="NCBI Taxonomy" id="99287"/>
    <lineage>
        <taxon>Bacteria</taxon>
        <taxon>Pseudomonadati</taxon>
        <taxon>Pseudomonadota</taxon>
        <taxon>Gammaproteobacteria</taxon>
        <taxon>Enterobacterales</taxon>
        <taxon>Enterobacteriaceae</taxon>
        <taxon>Salmonella</taxon>
    </lineage>
</organism>
<protein>
    <recommendedName>
        <fullName evidence="1">ATP synthase subunit b</fullName>
    </recommendedName>
    <alternativeName>
        <fullName evidence="1">ATP synthase F(0) sector subunit b</fullName>
    </alternativeName>
    <alternativeName>
        <fullName evidence="1">ATPase subunit I</fullName>
    </alternativeName>
    <alternativeName>
        <fullName evidence="1">F-type ATPase subunit b</fullName>
        <shortName evidence="1">F-ATPase subunit b</shortName>
    </alternativeName>
</protein>
<gene>
    <name evidence="1" type="primary">atpF</name>
    <name type="ordered locus">STM3869</name>
</gene>
<accession>Q7CPE4</accession>
<keyword id="KW-0066">ATP synthesis</keyword>
<keyword id="KW-0997">Cell inner membrane</keyword>
<keyword id="KW-1003">Cell membrane</keyword>
<keyword id="KW-0138">CF(0)</keyword>
<keyword id="KW-0375">Hydrogen ion transport</keyword>
<keyword id="KW-0406">Ion transport</keyword>
<keyword id="KW-0472">Membrane</keyword>
<keyword id="KW-1185">Reference proteome</keyword>
<keyword id="KW-0812">Transmembrane</keyword>
<keyword id="KW-1133">Transmembrane helix</keyword>
<keyword id="KW-0813">Transport</keyword>
<sequence length="156" mass="17365">MNLNATILGQAIAFILFVWFCMKYVWPPLMAAIEKRQKEIADGLASAERAHKDLDLAKASATDQLKKAKAEAQVIIEQANKRRAQILDEAKTEAEQERTKIVAQAQAEIEAERKRAREELRKQVAILAVAGAEKIIERSVDEAANSDIVDKLVAEL</sequence>
<feature type="chain" id="PRO_0000368751" description="ATP synthase subunit b">
    <location>
        <begin position="1"/>
        <end position="156"/>
    </location>
</feature>
<feature type="transmembrane region" description="Helical" evidence="1">
    <location>
        <begin position="11"/>
        <end position="31"/>
    </location>
</feature>
<evidence type="ECO:0000255" key="1">
    <source>
        <dbReference type="HAMAP-Rule" id="MF_01398"/>
    </source>
</evidence>
<proteinExistence type="inferred from homology"/>
<comment type="function">
    <text evidence="1">F(1)F(0) ATP synthase produces ATP from ADP in the presence of a proton or sodium gradient. F-type ATPases consist of two structural domains, F(1) containing the extramembraneous catalytic core and F(0) containing the membrane proton channel, linked together by a central stalk and a peripheral stalk. During catalysis, ATP synthesis in the catalytic domain of F(1) is coupled via a rotary mechanism of the central stalk subunits to proton translocation.</text>
</comment>
<comment type="function">
    <text evidence="1">Component of the F(0) channel, it forms part of the peripheral stalk, linking F(1) to F(0).</text>
</comment>
<comment type="subunit">
    <text evidence="1">F-type ATPases have 2 components, F(1) - the catalytic core - and F(0) - the membrane proton channel. F(1) has five subunits: alpha(3), beta(3), gamma(1), delta(1), epsilon(1). F(0) has three main subunits: a(1), b(2) and c(10-14). The alpha and beta chains form an alternating ring which encloses part of the gamma chain. F(1) is attached to F(0) by a central stalk formed by the gamma and epsilon chains, while a peripheral stalk is formed by the delta and b chains.</text>
</comment>
<comment type="subcellular location">
    <subcellularLocation>
        <location evidence="1">Cell inner membrane</location>
        <topology evidence="1">Single-pass membrane protein</topology>
    </subcellularLocation>
</comment>
<comment type="similarity">
    <text evidence="1">Belongs to the ATPase B chain family.</text>
</comment>
<dbReference type="EMBL" id="AE006468">
    <property type="protein sequence ID" value="AAL22727.1"/>
    <property type="molecule type" value="Genomic_DNA"/>
</dbReference>
<dbReference type="RefSeq" id="NP_462768.1">
    <property type="nucleotide sequence ID" value="NC_003197.2"/>
</dbReference>
<dbReference type="RefSeq" id="WP_001052212.1">
    <property type="nucleotide sequence ID" value="NC_003197.2"/>
</dbReference>
<dbReference type="SMR" id="Q7CPE4"/>
<dbReference type="STRING" id="99287.STM3869"/>
<dbReference type="PaxDb" id="99287-STM3869"/>
<dbReference type="GeneID" id="1255396"/>
<dbReference type="GeneID" id="66758158"/>
<dbReference type="KEGG" id="stm:STM3869"/>
<dbReference type="PATRIC" id="fig|99287.12.peg.4098"/>
<dbReference type="HOGENOM" id="CLU_079215_4_5_6"/>
<dbReference type="OMA" id="ILAWFTM"/>
<dbReference type="PhylomeDB" id="Q7CPE4"/>
<dbReference type="BioCyc" id="SENT99287:STM3869-MONOMER"/>
<dbReference type="Proteomes" id="UP000001014">
    <property type="component" value="Chromosome"/>
</dbReference>
<dbReference type="GO" id="GO:0005886">
    <property type="term" value="C:plasma membrane"/>
    <property type="evidence" value="ECO:0007669"/>
    <property type="project" value="UniProtKB-SubCell"/>
</dbReference>
<dbReference type="GO" id="GO:0045259">
    <property type="term" value="C:proton-transporting ATP synthase complex"/>
    <property type="evidence" value="ECO:0007669"/>
    <property type="project" value="UniProtKB-KW"/>
</dbReference>
<dbReference type="GO" id="GO:0046933">
    <property type="term" value="F:proton-transporting ATP synthase activity, rotational mechanism"/>
    <property type="evidence" value="ECO:0007669"/>
    <property type="project" value="UniProtKB-UniRule"/>
</dbReference>
<dbReference type="CDD" id="cd06503">
    <property type="entry name" value="ATP-synt_Fo_b"/>
    <property type="match status" value="1"/>
</dbReference>
<dbReference type="FunFam" id="1.20.5.620:FF:000001">
    <property type="entry name" value="ATP synthase subunit b"/>
    <property type="match status" value="1"/>
</dbReference>
<dbReference type="Gene3D" id="1.20.5.620">
    <property type="entry name" value="F1F0 ATP synthase subunit B, membrane domain"/>
    <property type="match status" value="1"/>
</dbReference>
<dbReference type="HAMAP" id="MF_01398">
    <property type="entry name" value="ATP_synth_b_bprime"/>
    <property type="match status" value="1"/>
</dbReference>
<dbReference type="InterPro" id="IPR028987">
    <property type="entry name" value="ATP_synth_B-like_membr_sf"/>
</dbReference>
<dbReference type="InterPro" id="IPR002146">
    <property type="entry name" value="ATP_synth_b/b'su_bac/chlpt"/>
</dbReference>
<dbReference type="InterPro" id="IPR005864">
    <property type="entry name" value="ATP_synth_F0_bsu_bac"/>
</dbReference>
<dbReference type="InterPro" id="IPR050059">
    <property type="entry name" value="ATP_synthase_B_chain"/>
</dbReference>
<dbReference type="NCBIfam" id="TIGR01144">
    <property type="entry name" value="ATP_synt_b"/>
    <property type="match status" value="1"/>
</dbReference>
<dbReference type="NCBIfam" id="NF004411">
    <property type="entry name" value="PRK05759.1-2"/>
    <property type="match status" value="1"/>
</dbReference>
<dbReference type="NCBIfam" id="NF004413">
    <property type="entry name" value="PRK05759.1-4"/>
    <property type="match status" value="1"/>
</dbReference>
<dbReference type="PANTHER" id="PTHR33445:SF1">
    <property type="entry name" value="ATP SYNTHASE SUBUNIT B"/>
    <property type="match status" value="1"/>
</dbReference>
<dbReference type="PANTHER" id="PTHR33445">
    <property type="entry name" value="ATP SYNTHASE SUBUNIT B', CHLOROPLASTIC"/>
    <property type="match status" value="1"/>
</dbReference>
<dbReference type="Pfam" id="PF00430">
    <property type="entry name" value="ATP-synt_B"/>
    <property type="match status" value="1"/>
</dbReference>
<dbReference type="SUPFAM" id="SSF81573">
    <property type="entry name" value="F1F0 ATP synthase subunit B, membrane domain"/>
    <property type="match status" value="1"/>
</dbReference>
<reference key="1">
    <citation type="journal article" date="2001" name="Nature">
        <title>Complete genome sequence of Salmonella enterica serovar Typhimurium LT2.</title>
        <authorList>
            <person name="McClelland M."/>
            <person name="Sanderson K.E."/>
            <person name="Spieth J."/>
            <person name="Clifton S.W."/>
            <person name="Latreille P."/>
            <person name="Courtney L."/>
            <person name="Porwollik S."/>
            <person name="Ali J."/>
            <person name="Dante M."/>
            <person name="Du F."/>
            <person name="Hou S."/>
            <person name="Layman D."/>
            <person name="Leonard S."/>
            <person name="Nguyen C."/>
            <person name="Scott K."/>
            <person name="Holmes A."/>
            <person name="Grewal N."/>
            <person name="Mulvaney E."/>
            <person name="Ryan E."/>
            <person name="Sun H."/>
            <person name="Florea L."/>
            <person name="Miller W."/>
            <person name="Stoneking T."/>
            <person name="Nhan M."/>
            <person name="Waterston R."/>
            <person name="Wilson R.K."/>
        </authorList>
    </citation>
    <scope>NUCLEOTIDE SEQUENCE [LARGE SCALE GENOMIC DNA]</scope>
    <source>
        <strain>LT2 / SGSC1412 / ATCC 700720</strain>
    </source>
</reference>
<name>ATPF_SALTY</name>